<protein>
    <recommendedName>
        <fullName>QWRF motif-containing protein 9</fullName>
    </recommendedName>
</protein>
<evidence type="ECO:0000250" key="1"/>
<evidence type="ECO:0000256" key="2">
    <source>
        <dbReference type="SAM" id="MobiDB-lite"/>
    </source>
</evidence>
<evidence type="ECO:0000305" key="3"/>
<comment type="similarity">
    <text evidence="3">Belongs to the QWRF family.</text>
</comment>
<comment type="sequence caution" evidence="3">
    <conflict type="erroneous gene model prediction">
        <sequence resource="EMBL-CDS" id="AED94917"/>
    </conflict>
</comment>
<comment type="sequence caution" evidence="3">
    <conflict type="erroneous gene model prediction">
        <sequence resource="EMBL-CDS" id="BAB08280"/>
    </conflict>
</comment>
<feature type="chain" id="PRO_0000423630" description="QWRF motif-containing protein 9">
    <location>
        <begin position="1"/>
        <end position="513"/>
    </location>
</feature>
<feature type="region of interest" description="Disordered" evidence="2">
    <location>
        <begin position="1"/>
        <end position="89"/>
    </location>
</feature>
<feature type="region of interest" description="Disordered" evidence="2">
    <location>
        <begin position="115"/>
        <end position="144"/>
    </location>
</feature>
<feature type="region of interest" description="Disordered" evidence="2">
    <location>
        <begin position="184"/>
        <end position="293"/>
    </location>
</feature>
<feature type="short sequence motif" description="QWRF motif" evidence="1">
    <location>
        <begin position="334"/>
        <end position="337"/>
    </location>
</feature>
<feature type="compositionally biased region" description="Polar residues" evidence="2">
    <location>
        <begin position="1"/>
        <end position="26"/>
    </location>
</feature>
<feature type="compositionally biased region" description="Polar residues" evidence="2">
    <location>
        <begin position="43"/>
        <end position="55"/>
    </location>
</feature>
<feature type="compositionally biased region" description="Polar residues" evidence="2">
    <location>
        <begin position="65"/>
        <end position="78"/>
    </location>
</feature>
<feature type="compositionally biased region" description="Basic and acidic residues" evidence="2">
    <location>
        <begin position="79"/>
        <end position="89"/>
    </location>
</feature>
<feature type="compositionally biased region" description="Polar residues" evidence="2">
    <location>
        <begin position="202"/>
        <end position="211"/>
    </location>
</feature>
<feature type="compositionally biased region" description="Polar residues" evidence="2">
    <location>
        <begin position="244"/>
        <end position="262"/>
    </location>
</feature>
<reference key="1">
    <citation type="journal article" date="1997" name="DNA Res.">
        <title>Structural analysis of Arabidopsis thaliana chromosome 5. III. Sequence features of the regions of 1,191,918 bp covered by seventeen physically assigned P1 clones.</title>
        <authorList>
            <person name="Nakamura Y."/>
            <person name="Sato S."/>
            <person name="Kaneko T."/>
            <person name="Kotani H."/>
            <person name="Asamizu E."/>
            <person name="Miyajima N."/>
            <person name="Tabata S."/>
        </authorList>
    </citation>
    <scope>NUCLEOTIDE SEQUENCE [LARGE SCALE GENOMIC DNA]</scope>
    <source>
        <strain>cv. Columbia</strain>
    </source>
</reference>
<reference key="2">
    <citation type="journal article" date="2017" name="Plant J.">
        <title>Araport11: a complete reannotation of the Arabidopsis thaliana reference genome.</title>
        <authorList>
            <person name="Cheng C.Y."/>
            <person name="Krishnakumar V."/>
            <person name="Chan A.P."/>
            <person name="Thibaud-Nissen F."/>
            <person name="Schobel S."/>
            <person name="Town C.D."/>
        </authorList>
    </citation>
    <scope>GENOME REANNOTATION</scope>
    <source>
        <strain>cv. Columbia</strain>
    </source>
</reference>
<reference key="3">
    <citation type="journal article" date="2010" name="Plant Cell">
        <title>The cytoskeleton and the peroxisomal-targeted snowy cotyledon3 protein are required for chloroplast development in Arabidopsis.</title>
        <authorList>
            <person name="Albrecht V."/>
            <person name="Simkova K."/>
            <person name="Carrie C."/>
            <person name="Delannoy E."/>
            <person name="Giraud E."/>
            <person name="Whelan J."/>
            <person name="Small I.D."/>
            <person name="Apel K."/>
            <person name="Badger M.R."/>
            <person name="Pogson B.J."/>
        </authorList>
    </citation>
    <scope>GENE FAMILY</scope>
    <scope>NOMENCLATURE</scope>
</reference>
<organism>
    <name type="scientific">Arabidopsis thaliana</name>
    <name type="common">Mouse-ear cress</name>
    <dbReference type="NCBI Taxonomy" id="3702"/>
    <lineage>
        <taxon>Eukaryota</taxon>
        <taxon>Viridiplantae</taxon>
        <taxon>Streptophyta</taxon>
        <taxon>Embryophyta</taxon>
        <taxon>Tracheophyta</taxon>
        <taxon>Spermatophyta</taxon>
        <taxon>Magnoliopsida</taxon>
        <taxon>eudicotyledons</taxon>
        <taxon>Gunneridae</taxon>
        <taxon>Pentapetalae</taxon>
        <taxon>rosids</taxon>
        <taxon>malvids</taxon>
        <taxon>Brassicales</taxon>
        <taxon>Brassicaceae</taxon>
        <taxon>Camelineae</taxon>
        <taxon>Arabidopsis</taxon>
    </lineage>
</organism>
<gene>
    <name type="primary">QWRF9</name>
    <name type="ordered locus">At5g43160</name>
    <name type="ORF">MMG4.20</name>
</gene>
<proteinExistence type="inferred from homology"/>
<dbReference type="EMBL" id="AB008267">
    <property type="protein sequence ID" value="BAB08280.1"/>
    <property type="status" value="ALT_SEQ"/>
    <property type="molecule type" value="Genomic_DNA"/>
</dbReference>
<dbReference type="EMBL" id="CP002688">
    <property type="protein sequence ID" value="AED94917.1"/>
    <property type="status" value="ALT_SEQ"/>
    <property type="molecule type" value="Genomic_DNA"/>
</dbReference>
<dbReference type="RefSeq" id="NP_001332192.1">
    <property type="nucleotide sequence ID" value="NM_001344476.1"/>
</dbReference>
<dbReference type="RefSeq" id="NP_199130.4">
    <property type="nucleotide sequence ID" value="NM_123682.4"/>
</dbReference>
<dbReference type="SMR" id="F4K4M0"/>
<dbReference type="STRING" id="3702.F4K4M0"/>
<dbReference type="GlyGen" id="F4K4M0">
    <property type="glycosylation" value="1 site"/>
</dbReference>
<dbReference type="PaxDb" id="3702-AT5G43160.1"/>
<dbReference type="GeneID" id="834333"/>
<dbReference type="KEGG" id="ath:AT5G43160"/>
<dbReference type="Araport" id="AT5G43160"/>
<dbReference type="TAIR" id="AT5G43160">
    <property type="gene designation" value="QWRF9"/>
</dbReference>
<dbReference type="eggNOG" id="ENOG502QYE5">
    <property type="taxonomic scope" value="Eukaryota"/>
</dbReference>
<dbReference type="HOGENOM" id="CLU_025164_1_0_1"/>
<dbReference type="InParanoid" id="F4K4M0"/>
<dbReference type="PRO" id="PR:F4K4M0"/>
<dbReference type="Proteomes" id="UP000006548">
    <property type="component" value="Chromosome 5"/>
</dbReference>
<dbReference type="ExpressionAtlas" id="F4K4M0">
    <property type="expression patterns" value="baseline and differential"/>
</dbReference>
<dbReference type="GO" id="GO:0005737">
    <property type="term" value="C:cytoplasm"/>
    <property type="evidence" value="ECO:0000318"/>
    <property type="project" value="GO_Central"/>
</dbReference>
<dbReference type="GO" id="GO:0005880">
    <property type="term" value="C:nuclear microtubule"/>
    <property type="evidence" value="ECO:0000318"/>
    <property type="project" value="GO_Central"/>
</dbReference>
<dbReference type="GO" id="GO:0008017">
    <property type="term" value="F:microtubule binding"/>
    <property type="evidence" value="ECO:0000318"/>
    <property type="project" value="GO_Central"/>
</dbReference>
<dbReference type="GO" id="GO:0051225">
    <property type="term" value="P:spindle assembly"/>
    <property type="evidence" value="ECO:0000318"/>
    <property type="project" value="GO_Central"/>
</dbReference>
<dbReference type="InterPro" id="IPR007573">
    <property type="entry name" value="QWRF"/>
</dbReference>
<dbReference type="PANTHER" id="PTHR31807">
    <property type="entry name" value="AUGMIN FAMILY MEMBER"/>
    <property type="match status" value="1"/>
</dbReference>
<dbReference type="PANTHER" id="PTHR31807:SF38">
    <property type="entry name" value="QWRF MOTIF-CONTAINING PROTEIN 9"/>
    <property type="match status" value="1"/>
</dbReference>
<dbReference type="Pfam" id="PF04484">
    <property type="entry name" value="QWRF"/>
    <property type="match status" value="1"/>
</dbReference>
<name>QWRF9_ARATH</name>
<sequence>MTAATISPSFNANVKQNKPPSFPSESSNRRPKTRDVASRYLGGTSSFFHQSSPKRCQSPIVTRPVTPSSVATNRPQSTPRRESLDRREVSKAERMLLTSGRSLFASFQADSFTPGTLERRKTTSSATISKSGGGKQEKLKLSDQWPRSLQPSCLSSRSVDFTDTRKKLIGSGNGVARALQDSMVSNRPVSRERITSVDLETESVSSGSSNGRGKMLPARGNVVKARVSQDRLEPSSHGLRKISVDSSVLSPKEANSLSSPRGTSIARGLSPSREVVPPRGVSPSDRMSPLRVRSSLSKNTPLIPHFAVDGKEKIRDNGVADAHLLRLLHSRLLQWQFANARANAVISSQKMREERRLYNAWRSISNLYNSVSMKRIEMQHLKQNLKLISILNMQMGHLEEWLVIDRNYMGSLVGAAEALKGSTLCLPVDCGAMVNVQSVKDAICSAVDVMQAMASSICLLLPKVGKISSLAAELGRVNAKDEGMLDVCRDLLNTISALQVTECSLRTQVTQLQ</sequence>
<keyword id="KW-1185">Reference proteome</keyword>
<accession>F4K4M0</accession>
<accession>Q9FMG7</accession>